<protein>
    <recommendedName>
        <fullName evidence="1">Phosphatidylserine decarboxylase proenzyme</fullName>
        <ecNumber evidence="1">4.1.1.65</ecNumber>
    </recommendedName>
    <component>
        <recommendedName>
            <fullName evidence="1">Phosphatidylserine decarboxylase alpha chain</fullName>
        </recommendedName>
    </component>
    <component>
        <recommendedName>
            <fullName evidence="1">Phosphatidylserine decarboxylase beta chain</fullName>
        </recommendedName>
    </component>
</protein>
<comment type="function">
    <text evidence="1">Catalyzes the formation of phosphatidylethanolamine (PtdEtn) from phosphatidylserine (PtdSer).</text>
</comment>
<comment type="catalytic activity">
    <reaction evidence="1">
        <text>a 1,2-diacyl-sn-glycero-3-phospho-L-serine + H(+) = a 1,2-diacyl-sn-glycero-3-phosphoethanolamine + CO2</text>
        <dbReference type="Rhea" id="RHEA:20828"/>
        <dbReference type="ChEBI" id="CHEBI:15378"/>
        <dbReference type="ChEBI" id="CHEBI:16526"/>
        <dbReference type="ChEBI" id="CHEBI:57262"/>
        <dbReference type="ChEBI" id="CHEBI:64612"/>
        <dbReference type="EC" id="4.1.1.65"/>
    </reaction>
</comment>
<comment type="cofactor">
    <cofactor evidence="1">
        <name>pyruvate</name>
        <dbReference type="ChEBI" id="CHEBI:15361"/>
    </cofactor>
    <text evidence="1">Binds 1 pyruvoyl group covalently per subunit.</text>
</comment>
<comment type="pathway">
    <text evidence="1">Phospholipid metabolism; phosphatidylethanolamine biosynthesis; phosphatidylethanolamine from CDP-diacylglycerol: step 2/2.</text>
</comment>
<comment type="subunit">
    <text evidence="1">Heterodimer of a large membrane-associated beta subunit and a small pyruvoyl-containing alpha subunit.</text>
</comment>
<comment type="subcellular location">
    <subcellularLocation>
        <location evidence="1">Cell membrane</location>
        <topology evidence="1">Peripheral membrane protein</topology>
    </subcellularLocation>
</comment>
<comment type="PTM">
    <text evidence="1">Is synthesized initially as an inactive proenzyme. Formation of the active enzyme involves a self-maturation process in which the active site pyruvoyl group is generated from an internal serine residue via an autocatalytic post-translational modification. Two non-identical subunits are generated from the proenzyme in this reaction, and the pyruvate is formed at the N-terminus of the alpha chain, which is derived from the carboxyl end of the proenzyme. The autoendoproteolytic cleavage occurs by a canonical serine protease mechanism, in which the side chain hydroxyl group of the serine supplies its oxygen atom to form the C-terminus of the beta chain, while the remainder of the serine residue undergoes an oxidative deamination to produce ammonia and the pyruvoyl prosthetic group on the alpha chain. During this reaction, the Ser that is part of the protease active site of the proenzyme becomes the pyruvoyl prosthetic group, which constitutes an essential element of the active site of the mature decarboxylase.</text>
</comment>
<comment type="similarity">
    <text evidence="1">Belongs to the phosphatidylserine decarboxylase family. PSD-B subfamily. Prokaryotic type I sub-subfamily.</text>
</comment>
<accession>A1VUQ1</accession>
<reference key="1">
    <citation type="journal article" date="2009" name="Environ. Microbiol.">
        <title>The genome of Polaromonas naphthalenivorans strain CJ2, isolated from coal tar-contaminated sediment, reveals physiological and metabolic versatility and evolution through extensive horizontal gene transfer.</title>
        <authorList>
            <person name="Yagi J.M."/>
            <person name="Sims D."/>
            <person name="Brettin T."/>
            <person name="Bruce D."/>
            <person name="Madsen E.L."/>
        </authorList>
    </citation>
    <scope>NUCLEOTIDE SEQUENCE [LARGE SCALE GENOMIC DNA]</scope>
    <source>
        <strain>CJ2</strain>
    </source>
</reference>
<organism>
    <name type="scientific">Polaromonas naphthalenivorans (strain CJ2)</name>
    <dbReference type="NCBI Taxonomy" id="365044"/>
    <lineage>
        <taxon>Bacteria</taxon>
        <taxon>Pseudomonadati</taxon>
        <taxon>Pseudomonadota</taxon>
        <taxon>Betaproteobacteria</taxon>
        <taxon>Burkholderiales</taxon>
        <taxon>Comamonadaceae</taxon>
        <taxon>Polaromonas</taxon>
    </lineage>
</organism>
<evidence type="ECO:0000255" key="1">
    <source>
        <dbReference type="HAMAP-Rule" id="MF_00662"/>
    </source>
</evidence>
<gene>
    <name evidence="1" type="primary">psd</name>
    <name type="ordered locus">Pnap_4088</name>
</gene>
<dbReference type="EC" id="4.1.1.65" evidence="1"/>
<dbReference type="EMBL" id="CP000529">
    <property type="protein sequence ID" value="ABM39379.1"/>
    <property type="molecule type" value="Genomic_DNA"/>
</dbReference>
<dbReference type="RefSeq" id="WP_011803441.1">
    <property type="nucleotide sequence ID" value="NC_008781.1"/>
</dbReference>
<dbReference type="SMR" id="A1VUQ1"/>
<dbReference type="STRING" id="365044.Pnap_4088"/>
<dbReference type="KEGG" id="pna:Pnap_4088"/>
<dbReference type="eggNOG" id="COG0688">
    <property type="taxonomic scope" value="Bacteria"/>
</dbReference>
<dbReference type="HOGENOM" id="CLU_029061_4_1_4"/>
<dbReference type="OrthoDB" id="9802030at2"/>
<dbReference type="UniPathway" id="UPA00558">
    <property type="reaction ID" value="UER00616"/>
</dbReference>
<dbReference type="Proteomes" id="UP000000644">
    <property type="component" value="Chromosome"/>
</dbReference>
<dbReference type="GO" id="GO:0005886">
    <property type="term" value="C:plasma membrane"/>
    <property type="evidence" value="ECO:0007669"/>
    <property type="project" value="UniProtKB-SubCell"/>
</dbReference>
<dbReference type="GO" id="GO:0004609">
    <property type="term" value="F:phosphatidylserine decarboxylase activity"/>
    <property type="evidence" value="ECO:0007669"/>
    <property type="project" value="UniProtKB-UniRule"/>
</dbReference>
<dbReference type="GO" id="GO:0006646">
    <property type="term" value="P:phosphatidylethanolamine biosynthetic process"/>
    <property type="evidence" value="ECO:0007669"/>
    <property type="project" value="UniProtKB-UniRule"/>
</dbReference>
<dbReference type="HAMAP" id="MF_00662">
    <property type="entry name" value="PS_decarb_PSD_B_type1"/>
    <property type="match status" value="1"/>
</dbReference>
<dbReference type="InterPro" id="IPR003817">
    <property type="entry name" value="PS_Dcarbxylase"/>
</dbReference>
<dbReference type="InterPro" id="IPR033177">
    <property type="entry name" value="PSD-B"/>
</dbReference>
<dbReference type="InterPro" id="IPR033178">
    <property type="entry name" value="PSD_type1_pro"/>
</dbReference>
<dbReference type="NCBIfam" id="TIGR00163">
    <property type="entry name" value="PS_decarb"/>
    <property type="match status" value="1"/>
</dbReference>
<dbReference type="PANTHER" id="PTHR10067">
    <property type="entry name" value="PHOSPHATIDYLSERINE DECARBOXYLASE"/>
    <property type="match status" value="1"/>
</dbReference>
<dbReference type="PANTHER" id="PTHR10067:SF6">
    <property type="entry name" value="PHOSPHATIDYLSERINE DECARBOXYLASE PROENZYME, MITOCHONDRIAL"/>
    <property type="match status" value="1"/>
</dbReference>
<dbReference type="Pfam" id="PF02666">
    <property type="entry name" value="PS_Dcarbxylase"/>
    <property type="match status" value="1"/>
</dbReference>
<keyword id="KW-1003">Cell membrane</keyword>
<keyword id="KW-0210">Decarboxylase</keyword>
<keyword id="KW-0444">Lipid biosynthesis</keyword>
<keyword id="KW-0443">Lipid metabolism</keyword>
<keyword id="KW-0456">Lyase</keyword>
<keyword id="KW-0472">Membrane</keyword>
<keyword id="KW-0594">Phospholipid biosynthesis</keyword>
<keyword id="KW-1208">Phospholipid metabolism</keyword>
<keyword id="KW-0670">Pyruvate</keyword>
<keyword id="KW-1185">Reference proteome</keyword>
<keyword id="KW-0865">Zymogen</keyword>
<name>PSD_POLNA</name>
<sequence length="289" mass="31778">MSDRLAVLPQYLLPKQALTHFAGFVASRERGWVTTEIIRRFVAKYRVNMSEALDSDIASYLTFNDFFTRALKPGARPLAQAALVCPVDGAISQFGAIEHDQIFQAKGHHYSTTALVGGDAALAAHYQNGHFATIYLSPKDYHRIHMPCDGRLTRMIYVPGDLFSVNPVTARGVPGLFARNERVVCVFESARGPFVLALVGATIVGSMATVWHGVVNPPRGKAVREWRYPASGQPEVVLRQGEEMGRFLLGSTVVLLFPKGPLRFNPDWEPGRAVRLGEAMADVAADSQR</sequence>
<proteinExistence type="inferred from homology"/>
<feature type="chain" id="PRO_1000026562" description="Phosphatidylserine decarboxylase beta chain" evidence="1">
    <location>
        <begin position="1"/>
        <end position="250"/>
    </location>
</feature>
<feature type="chain" id="PRO_1000026563" description="Phosphatidylserine decarboxylase alpha chain" evidence="1">
    <location>
        <begin position="251"/>
        <end position="289"/>
    </location>
</feature>
<feature type="active site" description="Charge relay system; for autoendoproteolytic cleavage activity" evidence="1">
    <location>
        <position position="88"/>
    </location>
</feature>
<feature type="active site" description="Charge relay system; for autoendoproteolytic cleavage activity" evidence="1">
    <location>
        <position position="145"/>
    </location>
</feature>
<feature type="active site" description="Charge relay system; for autoendoproteolytic cleavage activity" evidence="1">
    <location>
        <position position="251"/>
    </location>
</feature>
<feature type="active site" description="Schiff-base intermediate with substrate; via pyruvic acid; for decarboxylase activity" evidence="1">
    <location>
        <position position="251"/>
    </location>
</feature>
<feature type="site" description="Cleavage (non-hydrolytic); by autocatalysis" evidence="1">
    <location>
        <begin position="250"/>
        <end position="251"/>
    </location>
</feature>
<feature type="modified residue" description="Pyruvic acid (Ser); by autocatalysis" evidence="1">
    <location>
        <position position="251"/>
    </location>
</feature>